<keyword id="KW-0227">DNA damage</keyword>
<keyword id="KW-0233">DNA recombination</keyword>
<keyword id="KW-0234">DNA repair</keyword>
<keyword id="KW-1185">Reference proteome</keyword>
<evidence type="ECO:0000255" key="1">
    <source>
        <dbReference type="HAMAP-Rule" id="MF_00201"/>
    </source>
</evidence>
<name>RECO_DINSH</name>
<dbReference type="EMBL" id="CP000830">
    <property type="protein sequence ID" value="ABV91952.1"/>
    <property type="molecule type" value="Genomic_DNA"/>
</dbReference>
<dbReference type="RefSeq" id="WP_012176885.1">
    <property type="nucleotide sequence ID" value="NC_009952.1"/>
</dbReference>
<dbReference type="SMR" id="A8LLE2"/>
<dbReference type="STRING" id="398580.Dshi_0203"/>
<dbReference type="KEGG" id="dsh:Dshi_0203"/>
<dbReference type="eggNOG" id="COG1381">
    <property type="taxonomic scope" value="Bacteria"/>
</dbReference>
<dbReference type="HOGENOM" id="CLU_086029_0_0_5"/>
<dbReference type="OrthoDB" id="9804792at2"/>
<dbReference type="Proteomes" id="UP000006833">
    <property type="component" value="Chromosome"/>
</dbReference>
<dbReference type="GO" id="GO:0043590">
    <property type="term" value="C:bacterial nucleoid"/>
    <property type="evidence" value="ECO:0007669"/>
    <property type="project" value="TreeGrafter"/>
</dbReference>
<dbReference type="GO" id="GO:0006310">
    <property type="term" value="P:DNA recombination"/>
    <property type="evidence" value="ECO:0007669"/>
    <property type="project" value="UniProtKB-UniRule"/>
</dbReference>
<dbReference type="GO" id="GO:0006302">
    <property type="term" value="P:double-strand break repair"/>
    <property type="evidence" value="ECO:0007669"/>
    <property type="project" value="TreeGrafter"/>
</dbReference>
<dbReference type="Gene3D" id="2.40.50.140">
    <property type="entry name" value="Nucleic acid-binding proteins"/>
    <property type="match status" value="1"/>
</dbReference>
<dbReference type="Gene3D" id="1.20.1440.120">
    <property type="entry name" value="Recombination protein O, C-terminal domain"/>
    <property type="match status" value="1"/>
</dbReference>
<dbReference type="HAMAP" id="MF_00201">
    <property type="entry name" value="RecO"/>
    <property type="match status" value="1"/>
</dbReference>
<dbReference type="InterPro" id="IPR037278">
    <property type="entry name" value="ARFGAP/RecO"/>
</dbReference>
<dbReference type="InterPro" id="IPR022572">
    <property type="entry name" value="DNA_rep/recomb_RecO_N"/>
</dbReference>
<dbReference type="InterPro" id="IPR012340">
    <property type="entry name" value="NA-bd_OB-fold"/>
</dbReference>
<dbReference type="InterPro" id="IPR003717">
    <property type="entry name" value="RecO"/>
</dbReference>
<dbReference type="InterPro" id="IPR042242">
    <property type="entry name" value="RecO_C"/>
</dbReference>
<dbReference type="NCBIfam" id="TIGR00613">
    <property type="entry name" value="reco"/>
    <property type="match status" value="1"/>
</dbReference>
<dbReference type="PANTHER" id="PTHR33991">
    <property type="entry name" value="DNA REPAIR PROTEIN RECO"/>
    <property type="match status" value="1"/>
</dbReference>
<dbReference type="PANTHER" id="PTHR33991:SF1">
    <property type="entry name" value="DNA REPAIR PROTEIN RECO"/>
    <property type="match status" value="1"/>
</dbReference>
<dbReference type="Pfam" id="PF02565">
    <property type="entry name" value="RecO_C"/>
    <property type="match status" value="1"/>
</dbReference>
<dbReference type="Pfam" id="PF11967">
    <property type="entry name" value="RecO_N"/>
    <property type="match status" value="1"/>
</dbReference>
<dbReference type="SUPFAM" id="SSF57863">
    <property type="entry name" value="ArfGap/RecO-like zinc finger"/>
    <property type="match status" value="1"/>
</dbReference>
<dbReference type="SUPFAM" id="SSF50249">
    <property type="entry name" value="Nucleic acid-binding proteins"/>
    <property type="match status" value="1"/>
</dbReference>
<proteinExistence type="inferred from homology"/>
<organism>
    <name type="scientific">Dinoroseobacter shibae (strain DSM 16493 / NCIMB 14021 / DFL 12)</name>
    <dbReference type="NCBI Taxonomy" id="398580"/>
    <lineage>
        <taxon>Bacteria</taxon>
        <taxon>Pseudomonadati</taxon>
        <taxon>Pseudomonadota</taxon>
        <taxon>Alphaproteobacteria</taxon>
        <taxon>Rhodobacterales</taxon>
        <taxon>Roseobacteraceae</taxon>
        <taxon>Dinoroseobacter</taxon>
    </lineage>
</organism>
<reference key="1">
    <citation type="journal article" date="2010" name="ISME J.">
        <title>The complete genome sequence of the algal symbiont Dinoroseobacter shibae: a hitchhiker's guide to life in the sea.</title>
        <authorList>
            <person name="Wagner-Dobler I."/>
            <person name="Ballhausen B."/>
            <person name="Berger M."/>
            <person name="Brinkhoff T."/>
            <person name="Buchholz I."/>
            <person name="Bunk B."/>
            <person name="Cypionka H."/>
            <person name="Daniel R."/>
            <person name="Drepper T."/>
            <person name="Gerdts G."/>
            <person name="Hahnke S."/>
            <person name="Han C."/>
            <person name="Jahn D."/>
            <person name="Kalhoefer D."/>
            <person name="Kiss H."/>
            <person name="Klenk H.P."/>
            <person name="Kyrpides N."/>
            <person name="Liebl W."/>
            <person name="Liesegang H."/>
            <person name="Meincke L."/>
            <person name="Pati A."/>
            <person name="Petersen J."/>
            <person name="Piekarski T."/>
            <person name="Pommerenke C."/>
            <person name="Pradella S."/>
            <person name="Pukall R."/>
            <person name="Rabus R."/>
            <person name="Stackebrandt E."/>
            <person name="Thole S."/>
            <person name="Thompson L."/>
            <person name="Tielen P."/>
            <person name="Tomasch J."/>
            <person name="von Jan M."/>
            <person name="Wanphrut N."/>
            <person name="Wichels A."/>
            <person name="Zech H."/>
            <person name="Simon M."/>
        </authorList>
    </citation>
    <scope>NUCLEOTIDE SEQUENCE [LARGE SCALE GENOMIC DNA]</scope>
    <source>
        <strain>DSM 16493 / NCIMB 14021 / DFL 12</strain>
    </source>
</reference>
<comment type="function">
    <text evidence="1">Involved in DNA repair and RecF pathway recombination.</text>
</comment>
<comment type="similarity">
    <text evidence="1">Belongs to the RecO family.</text>
</comment>
<gene>
    <name evidence="1" type="primary">recO</name>
    <name type="ordered locus">Dshi_0203</name>
</gene>
<accession>A8LLE2</accession>
<sequence>MIEWREEGVLLSVRPHGETSVIVEAFTRAHGRHLGVVRGGVSRKLAPVLQPGAQLDLRWKARLEDHMGAFTVEPVRGRAAAVLGDRLALSAMSSALALARFSLAERAAYPGFYDQTVALLDALAEGTGWLPAYLDWEMALLDQMGFGLDLSGCAVRGVNEDLAFVSPRTGRAVSRQAAGAWVDRLLPLPEVMLGGPAHLHGVLEGLTTTGHFLEHKLAPALGNRPPPEARARFIDVLSRAR</sequence>
<feature type="chain" id="PRO_1000193375" description="DNA repair protein RecO">
    <location>
        <begin position="1"/>
        <end position="241"/>
    </location>
</feature>
<protein>
    <recommendedName>
        <fullName evidence="1">DNA repair protein RecO</fullName>
    </recommendedName>
    <alternativeName>
        <fullName evidence="1">Recombination protein O</fullName>
    </alternativeName>
</protein>